<accession>P63439</accession>
<accession>Q92AK2</accession>
<gene>
    <name evidence="1" type="primary">acpP</name>
    <name type="synonym">acpA</name>
    <name type="ordered locus">lmo1806</name>
</gene>
<keyword id="KW-0963">Cytoplasm</keyword>
<keyword id="KW-0275">Fatty acid biosynthesis</keyword>
<keyword id="KW-0276">Fatty acid metabolism</keyword>
<keyword id="KW-0444">Lipid biosynthesis</keyword>
<keyword id="KW-0443">Lipid metabolism</keyword>
<keyword id="KW-0596">Phosphopantetheine</keyword>
<keyword id="KW-0597">Phosphoprotein</keyword>
<keyword id="KW-1185">Reference proteome</keyword>
<reference key="1">
    <citation type="journal article" date="2001" name="Science">
        <title>Comparative genomics of Listeria species.</title>
        <authorList>
            <person name="Glaser P."/>
            <person name="Frangeul L."/>
            <person name="Buchrieser C."/>
            <person name="Rusniok C."/>
            <person name="Amend A."/>
            <person name="Baquero F."/>
            <person name="Berche P."/>
            <person name="Bloecker H."/>
            <person name="Brandt P."/>
            <person name="Chakraborty T."/>
            <person name="Charbit A."/>
            <person name="Chetouani F."/>
            <person name="Couve E."/>
            <person name="de Daruvar A."/>
            <person name="Dehoux P."/>
            <person name="Domann E."/>
            <person name="Dominguez-Bernal G."/>
            <person name="Duchaud E."/>
            <person name="Durant L."/>
            <person name="Dussurget O."/>
            <person name="Entian K.-D."/>
            <person name="Fsihi H."/>
            <person name="Garcia-del Portillo F."/>
            <person name="Garrido P."/>
            <person name="Gautier L."/>
            <person name="Goebel W."/>
            <person name="Gomez-Lopez N."/>
            <person name="Hain T."/>
            <person name="Hauf J."/>
            <person name="Jackson D."/>
            <person name="Jones L.-M."/>
            <person name="Kaerst U."/>
            <person name="Kreft J."/>
            <person name="Kuhn M."/>
            <person name="Kunst F."/>
            <person name="Kurapkat G."/>
            <person name="Madueno E."/>
            <person name="Maitournam A."/>
            <person name="Mata Vicente J."/>
            <person name="Ng E."/>
            <person name="Nedjari H."/>
            <person name="Nordsiek G."/>
            <person name="Novella S."/>
            <person name="de Pablos B."/>
            <person name="Perez-Diaz J.-C."/>
            <person name="Purcell R."/>
            <person name="Remmel B."/>
            <person name="Rose M."/>
            <person name="Schlueter T."/>
            <person name="Simoes N."/>
            <person name="Tierrez A."/>
            <person name="Vazquez-Boland J.-A."/>
            <person name="Voss H."/>
            <person name="Wehland J."/>
            <person name="Cossart P."/>
        </authorList>
    </citation>
    <scope>NUCLEOTIDE SEQUENCE [LARGE SCALE GENOMIC DNA]</scope>
    <source>
        <strain>ATCC BAA-679 / EGD-e</strain>
    </source>
</reference>
<feature type="chain" id="PRO_0000180152" description="Acyl carrier protein">
    <location>
        <begin position="1"/>
        <end position="77"/>
    </location>
</feature>
<feature type="domain" description="Carrier" evidence="2">
    <location>
        <begin position="2"/>
        <end position="77"/>
    </location>
</feature>
<feature type="modified residue" description="O-(pantetheine 4'-phosphoryl)serine" evidence="2">
    <location>
        <position position="37"/>
    </location>
</feature>
<dbReference type="EMBL" id="AL591981">
    <property type="protein sequence ID" value="CAC99884.1"/>
    <property type="molecule type" value="Genomic_DNA"/>
</dbReference>
<dbReference type="PIR" id="AF1300">
    <property type="entry name" value="AF1300"/>
</dbReference>
<dbReference type="RefSeq" id="NP_465331.1">
    <property type="nucleotide sequence ID" value="NC_003210.1"/>
</dbReference>
<dbReference type="RefSeq" id="WP_003723866.1">
    <property type="nucleotide sequence ID" value="NZ_CP149495.1"/>
</dbReference>
<dbReference type="SMR" id="P63439"/>
<dbReference type="STRING" id="169963.gene:17594491"/>
<dbReference type="PaxDb" id="169963-lmo1806"/>
<dbReference type="EnsemblBacteria" id="CAC99884">
    <property type="protein sequence ID" value="CAC99884"/>
    <property type="gene ID" value="CAC99884"/>
</dbReference>
<dbReference type="GeneID" id="986035"/>
<dbReference type="KEGG" id="lmo:lmo1806"/>
<dbReference type="PATRIC" id="fig|169963.11.peg.1851"/>
<dbReference type="eggNOG" id="COG0236">
    <property type="taxonomic scope" value="Bacteria"/>
</dbReference>
<dbReference type="HOGENOM" id="CLU_108696_5_3_9"/>
<dbReference type="OrthoDB" id="9804551at2"/>
<dbReference type="PhylomeDB" id="P63439"/>
<dbReference type="BioCyc" id="LMON169963:LMO1806-MONOMER"/>
<dbReference type="UniPathway" id="UPA00094"/>
<dbReference type="Proteomes" id="UP000000817">
    <property type="component" value="Chromosome"/>
</dbReference>
<dbReference type="GO" id="GO:0005829">
    <property type="term" value="C:cytosol"/>
    <property type="evidence" value="ECO:0000318"/>
    <property type="project" value="GO_Central"/>
</dbReference>
<dbReference type="GO" id="GO:0016020">
    <property type="term" value="C:membrane"/>
    <property type="evidence" value="ECO:0007669"/>
    <property type="project" value="GOC"/>
</dbReference>
<dbReference type="GO" id="GO:0000035">
    <property type="term" value="F:acyl binding"/>
    <property type="evidence" value="ECO:0000318"/>
    <property type="project" value="GO_Central"/>
</dbReference>
<dbReference type="GO" id="GO:0000036">
    <property type="term" value="F:acyl carrier activity"/>
    <property type="evidence" value="ECO:0000318"/>
    <property type="project" value="GO_Central"/>
</dbReference>
<dbReference type="GO" id="GO:0009245">
    <property type="term" value="P:lipid A biosynthetic process"/>
    <property type="evidence" value="ECO:0000318"/>
    <property type="project" value="GO_Central"/>
</dbReference>
<dbReference type="FunFam" id="1.10.1200.10:FF:000001">
    <property type="entry name" value="Acyl carrier protein"/>
    <property type="match status" value="1"/>
</dbReference>
<dbReference type="Gene3D" id="1.10.1200.10">
    <property type="entry name" value="ACP-like"/>
    <property type="match status" value="1"/>
</dbReference>
<dbReference type="HAMAP" id="MF_01217">
    <property type="entry name" value="Acyl_carrier"/>
    <property type="match status" value="1"/>
</dbReference>
<dbReference type="InterPro" id="IPR003231">
    <property type="entry name" value="ACP"/>
</dbReference>
<dbReference type="InterPro" id="IPR036736">
    <property type="entry name" value="ACP-like_sf"/>
</dbReference>
<dbReference type="InterPro" id="IPR009081">
    <property type="entry name" value="PP-bd_ACP"/>
</dbReference>
<dbReference type="InterPro" id="IPR006162">
    <property type="entry name" value="Ppantetheine_attach_site"/>
</dbReference>
<dbReference type="NCBIfam" id="TIGR00517">
    <property type="entry name" value="acyl_carrier"/>
    <property type="match status" value="1"/>
</dbReference>
<dbReference type="NCBIfam" id="NF002148">
    <property type="entry name" value="PRK00982.1-2"/>
    <property type="match status" value="1"/>
</dbReference>
<dbReference type="NCBIfam" id="NF002150">
    <property type="entry name" value="PRK00982.1-4"/>
    <property type="match status" value="1"/>
</dbReference>
<dbReference type="NCBIfam" id="NF002151">
    <property type="entry name" value="PRK00982.1-5"/>
    <property type="match status" value="1"/>
</dbReference>
<dbReference type="PANTHER" id="PTHR20863">
    <property type="entry name" value="ACYL CARRIER PROTEIN"/>
    <property type="match status" value="1"/>
</dbReference>
<dbReference type="PANTHER" id="PTHR20863:SF76">
    <property type="entry name" value="CARRIER DOMAIN-CONTAINING PROTEIN"/>
    <property type="match status" value="1"/>
</dbReference>
<dbReference type="Pfam" id="PF00550">
    <property type="entry name" value="PP-binding"/>
    <property type="match status" value="1"/>
</dbReference>
<dbReference type="SUPFAM" id="SSF47336">
    <property type="entry name" value="ACP-like"/>
    <property type="match status" value="1"/>
</dbReference>
<dbReference type="PROSITE" id="PS50075">
    <property type="entry name" value="CARRIER"/>
    <property type="match status" value="1"/>
</dbReference>
<dbReference type="PROSITE" id="PS00012">
    <property type="entry name" value="PHOSPHOPANTETHEINE"/>
    <property type="match status" value="1"/>
</dbReference>
<comment type="function">
    <text evidence="1">Carrier of the growing fatty acid chain in fatty acid biosynthesis.</text>
</comment>
<comment type="pathway">
    <text evidence="1">Lipid metabolism; fatty acid biosynthesis.</text>
</comment>
<comment type="subcellular location">
    <subcellularLocation>
        <location evidence="1">Cytoplasm</location>
    </subcellularLocation>
</comment>
<comment type="PTM">
    <text evidence="1">4'-phosphopantetheine is transferred from CoA to a specific serine of apo-ACP by AcpS. This modification is essential for activity because fatty acids are bound in thioester linkage to the sulfhydryl of the prosthetic group.</text>
</comment>
<comment type="similarity">
    <text evidence="1">Belongs to the acyl carrier protein (ACP) family.</text>
</comment>
<name>ACP_LISMO</name>
<protein>
    <recommendedName>
        <fullName evidence="1">Acyl carrier protein</fullName>
        <shortName evidence="1">ACP</shortName>
    </recommendedName>
</protein>
<proteinExistence type="inferred from homology"/>
<sequence length="77" mass="8359">MAEVLEKVTKIIVDRLGVEESKVTLEASFKEDLGADSLDVVELVMELEDEFGVEISDGDAENINTVGDAVKYIEANA</sequence>
<organism>
    <name type="scientific">Listeria monocytogenes serovar 1/2a (strain ATCC BAA-679 / EGD-e)</name>
    <dbReference type="NCBI Taxonomy" id="169963"/>
    <lineage>
        <taxon>Bacteria</taxon>
        <taxon>Bacillati</taxon>
        <taxon>Bacillota</taxon>
        <taxon>Bacilli</taxon>
        <taxon>Bacillales</taxon>
        <taxon>Listeriaceae</taxon>
        <taxon>Listeria</taxon>
    </lineage>
</organism>
<evidence type="ECO:0000255" key="1">
    <source>
        <dbReference type="HAMAP-Rule" id="MF_01217"/>
    </source>
</evidence>
<evidence type="ECO:0000255" key="2">
    <source>
        <dbReference type="PROSITE-ProRule" id="PRU00258"/>
    </source>
</evidence>